<organism>
    <name type="scientific">Yersinia pestis bv. Antiqua (strain Angola)</name>
    <dbReference type="NCBI Taxonomy" id="349746"/>
    <lineage>
        <taxon>Bacteria</taxon>
        <taxon>Pseudomonadati</taxon>
        <taxon>Pseudomonadota</taxon>
        <taxon>Gammaproteobacteria</taxon>
        <taxon>Enterobacterales</taxon>
        <taxon>Yersiniaceae</taxon>
        <taxon>Yersinia</taxon>
    </lineage>
</organism>
<comment type="function">
    <text evidence="1">Part of the outer membrane protein assembly complex, which is involved in assembly and insertion of beta-barrel proteins into the outer membrane. Constitutes, with BamD, the core component of the assembly machinery.</text>
</comment>
<comment type="subunit">
    <text evidence="1">Part of the Bam complex, which is composed of the outer membrane protein BamA, and four lipoproteins BamB, BamC, BamD and BamE.</text>
</comment>
<comment type="subcellular location">
    <subcellularLocation>
        <location evidence="1">Cell outer membrane</location>
    </subcellularLocation>
</comment>
<comment type="similarity">
    <text evidence="1">Belongs to the BamA family.</text>
</comment>
<sequence length="795" mass="87838">MAMKKLLIASLLFGSATVYGADGFVVNDIHFEGLQRVAVGAALLNMPVRVGDTVSDDDIGKTIRALFATGNFEDVRVLRDGNTLIVQVKERPTIASITFSGNKAVKEDMLKQNLEASGVRVGEALDRTTISNIEKGLEDFYYSVGKYSASVKAVVTPLPRNRVDLKLVFTEGVSAKIQQINIVGNHSFTTDELISRFQLRDEVPWWNVVGDRKYQKQKLAGDLETLRSFYLDRGYARFNIDSTQVSLTPDKKGIYVTINITEGPQFKLNSVIVSGNLAGHQSEAEKLTKIEPGELFNGSKVTRMEDDIKKMLGRYGYAYPRVVTQPEINDDDKTVKLHINVDAGNRFYVRHIRFEGNDTSKDSVLRREMRQMEGAWLGNDQVEAGKERLNRLGYFETVDVETQRVPGAADLVDVTYKVKERNTGSLNFGIGYGTESGVSFQVGVQQDNWLGTGNTVGINGTKNDYQTYAEFTLMDPYFTVDGVSLGGRIFYNDFKADNADLSGYTNSSYGADGTLGFPINENNSLRVGVGYVHNDLSDMLPQVAMWRYLESVGERPGYDGREGFTTDDFTLNLGWTYNNLDRGFFPTSGVKSSVNTKITVPGSDNEFYKVTFDTSAYQPLNEDRSWVLLGRGRLGYGDGIGSKEMPFYENFYAGGSSTVRGFRSNNIGPKAAYYANGGATVTNSTDAVGGNAMAVASIELITPTPFISEKYSNSVRTSIFIDSGTVWDTNWENTAKTRAAGIPDYGKASNIRVSAGVALQWMSPLGPLVFSYAKPVKDYEGDKSEQFQFNIGKTW</sequence>
<name>BAMA_YERPG</name>
<feature type="signal peptide" evidence="1">
    <location>
        <begin position="1"/>
        <end position="20"/>
    </location>
</feature>
<feature type="chain" id="PRO_1000145788" description="Outer membrane protein assembly factor BamA">
    <location>
        <begin position="21"/>
        <end position="795"/>
    </location>
</feature>
<feature type="domain" description="POTRA 1" evidence="2">
    <location>
        <begin position="24"/>
        <end position="91"/>
    </location>
</feature>
<feature type="domain" description="POTRA 2" evidence="2">
    <location>
        <begin position="92"/>
        <end position="172"/>
    </location>
</feature>
<feature type="domain" description="POTRA 3" evidence="2">
    <location>
        <begin position="175"/>
        <end position="263"/>
    </location>
</feature>
<feature type="domain" description="POTRA 4" evidence="2">
    <location>
        <begin position="266"/>
        <end position="344"/>
    </location>
</feature>
<feature type="domain" description="POTRA 5" evidence="2">
    <location>
        <begin position="347"/>
        <end position="421"/>
    </location>
</feature>
<reference key="1">
    <citation type="journal article" date="2010" name="J. Bacteriol.">
        <title>Genome sequence of the deep-rooted Yersinia pestis strain Angola reveals new insights into the evolution and pangenome of the plague bacterium.</title>
        <authorList>
            <person name="Eppinger M."/>
            <person name="Worsham P.L."/>
            <person name="Nikolich M.P."/>
            <person name="Riley D.R."/>
            <person name="Sebastian Y."/>
            <person name="Mou S."/>
            <person name="Achtman M."/>
            <person name="Lindler L.E."/>
            <person name="Ravel J."/>
        </authorList>
    </citation>
    <scope>NUCLEOTIDE SEQUENCE [LARGE SCALE GENOMIC DNA]</scope>
    <source>
        <strain>Angola</strain>
    </source>
</reference>
<gene>
    <name evidence="1" type="primary">bamA</name>
    <name type="synonym">yaeT</name>
    <name type="ordered locus">YpAngola_A3427</name>
</gene>
<proteinExistence type="inferred from homology"/>
<protein>
    <recommendedName>
        <fullName evidence="1">Outer membrane protein assembly factor BamA</fullName>
    </recommendedName>
</protein>
<accession>A9R388</accession>
<dbReference type="EMBL" id="CP000901">
    <property type="protein sequence ID" value="ABX85366.1"/>
    <property type="molecule type" value="Genomic_DNA"/>
</dbReference>
<dbReference type="RefSeq" id="WP_002212139.1">
    <property type="nucleotide sequence ID" value="NZ_CP009935.1"/>
</dbReference>
<dbReference type="SMR" id="A9R388"/>
<dbReference type="GeneID" id="57977509"/>
<dbReference type="KEGG" id="ypg:YpAngola_A3427"/>
<dbReference type="PATRIC" id="fig|349746.12.peg.122"/>
<dbReference type="GO" id="GO:1990063">
    <property type="term" value="C:Bam protein complex"/>
    <property type="evidence" value="ECO:0007669"/>
    <property type="project" value="TreeGrafter"/>
</dbReference>
<dbReference type="GO" id="GO:0043165">
    <property type="term" value="P:Gram-negative-bacterium-type cell outer membrane assembly"/>
    <property type="evidence" value="ECO:0007669"/>
    <property type="project" value="UniProtKB-UniRule"/>
</dbReference>
<dbReference type="GO" id="GO:0051205">
    <property type="term" value="P:protein insertion into membrane"/>
    <property type="evidence" value="ECO:0007669"/>
    <property type="project" value="UniProtKB-UniRule"/>
</dbReference>
<dbReference type="FunFam" id="2.40.160.50:FF:000001">
    <property type="entry name" value="Outer membrane protein assembly factor BamA"/>
    <property type="match status" value="1"/>
</dbReference>
<dbReference type="FunFam" id="3.10.20.310:FF:000001">
    <property type="entry name" value="Outer membrane protein assembly factor BamA"/>
    <property type="match status" value="1"/>
</dbReference>
<dbReference type="FunFam" id="3.10.20.310:FF:000002">
    <property type="entry name" value="Outer membrane protein assembly factor BamA"/>
    <property type="match status" value="1"/>
</dbReference>
<dbReference type="FunFam" id="3.10.20.310:FF:000003">
    <property type="entry name" value="Outer membrane protein assembly factor BamA"/>
    <property type="match status" value="1"/>
</dbReference>
<dbReference type="FunFam" id="3.10.20.310:FF:000004">
    <property type="entry name" value="Outer membrane protein assembly factor BamA"/>
    <property type="match status" value="1"/>
</dbReference>
<dbReference type="FunFam" id="3.10.20.310:FF:000005">
    <property type="entry name" value="Outer membrane protein assembly factor BamA"/>
    <property type="match status" value="1"/>
</dbReference>
<dbReference type="Gene3D" id="3.10.20.310">
    <property type="entry name" value="membrane protein fhac"/>
    <property type="match status" value="5"/>
</dbReference>
<dbReference type="Gene3D" id="2.40.160.50">
    <property type="entry name" value="membrane protein fhac: a member of the omp85/tpsb transporter family"/>
    <property type="match status" value="1"/>
</dbReference>
<dbReference type="HAMAP" id="MF_01430">
    <property type="entry name" value="OM_assembly_BamA"/>
    <property type="match status" value="1"/>
</dbReference>
<dbReference type="InterPro" id="IPR000184">
    <property type="entry name" value="Bac_surfAg_D15"/>
</dbReference>
<dbReference type="InterPro" id="IPR010827">
    <property type="entry name" value="BamA/TamA_POTRA"/>
</dbReference>
<dbReference type="InterPro" id="IPR039910">
    <property type="entry name" value="D15-like"/>
</dbReference>
<dbReference type="InterPro" id="IPR023707">
    <property type="entry name" value="OM_assembly_BamA"/>
</dbReference>
<dbReference type="InterPro" id="IPR034746">
    <property type="entry name" value="POTRA"/>
</dbReference>
<dbReference type="NCBIfam" id="TIGR03303">
    <property type="entry name" value="OM_YaeT"/>
    <property type="match status" value="1"/>
</dbReference>
<dbReference type="NCBIfam" id="NF008287">
    <property type="entry name" value="PRK11067.1"/>
    <property type="match status" value="1"/>
</dbReference>
<dbReference type="PANTHER" id="PTHR12815:SF23">
    <property type="entry name" value="OUTER MEMBRANE PROTEIN ASSEMBLY FACTOR BAMA"/>
    <property type="match status" value="1"/>
</dbReference>
<dbReference type="PANTHER" id="PTHR12815">
    <property type="entry name" value="SORTING AND ASSEMBLY MACHINERY SAMM50 PROTEIN FAMILY MEMBER"/>
    <property type="match status" value="1"/>
</dbReference>
<dbReference type="Pfam" id="PF01103">
    <property type="entry name" value="Omp85"/>
    <property type="match status" value="1"/>
</dbReference>
<dbReference type="Pfam" id="PF07244">
    <property type="entry name" value="POTRA"/>
    <property type="match status" value="4"/>
</dbReference>
<dbReference type="PIRSF" id="PIRSF006076">
    <property type="entry name" value="OM_assembly_OMP85"/>
    <property type="match status" value="1"/>
</dbReference>
<dbReference type="PROSITE" id="PS51779">
    <property type="entry name" value="POTRA"/>
    <property type="match status" value="5"/>
</dbReference>
<keyword id="KW-0998">Cell outer membrane</keyword>
<keyword id="KW-0472">Membrane</keyword>
<keyword id="KW-0677">Repeat</keyword>
<keyword id="KW-0732">Signal</keyword>
<keyword id="KW-0812">Transmembrane</keyword>
<keyword id="KW-1134">Transmembrane beta strand</keyword>
<evidence type="ECO:0000255" key="1">
    <source>
        <dbReference type="HAMAP-Rule" id="MF_01430"/>
    </source>
</evidence>
<evidence type="ECO:0000255" key="2">
    <source>
        <dbReference type="PROSITE-ProRule" id="PRU01115"/>
    </source>
</evidence>